<accession>Q8NIC8</accession>
<comment type="function">
    <text>TS is a member of the terpene cyclase group of enzymes. It catalyzes the isomerization and cyclization of farnesyl pyro-phosphate to form trichodiene, the first cyclic intermediate in the biosynthetic pathway for trichothecenes. It serves to branch trichothecene biosynthesis from the isoprenoid pathway.</text>
</comment>
<comment type="catalytic activity">
    <reaction>
        <text>(2E,6E)-farnesyl diphosphate = trichodiene + diphosphate</text>
        <dbReference type="Rhea" id="RHEA:12052"/>
        <dbReference type="ChEBI" id="CHEBI:15861"/>
        <dbReference type="ChEBI" id="CHEBI:33019"/>
        <dbReference type="ChEBI" id="CHEBI:175763"/>
        <dbReference type="EC" id="4.2.3.6"/>
    </reaction>
</comment>
<comment type="pathway">
    <text>Sesquiterpene biosynthesis; trichothecene biosynthesis.</text>
</comment>
<comment type="miscellaneous">
    <text>Trichothecenes are sesquiterpenoid toxins that act by inhibiting protein biosynthesis.</text>
</comment>
<comment type="similarity">
    <text evidence="1">Belongs to the trichodiene synthase family.</text>
</comment>
<reference key="1">
    <citation type="journal article" date="2002" name="Proc. Natl. Acad. Sci. U.S.A.">
        <title>Ancestral polymorphism and adaptive evolution in the trichothecene mycotoxin gene cluster of phytopathogenic Fusarium.</title>
        <authorList>
            <person name="Ward T.J."/>
            <person name="Bielawski J.P."/>
            <person name="Kistler H.C."/>
            <person name="Sullivan E."/>
            <person name="O'Donnell K."/>
        </authorList>
    </citation>
    <scope>NUCLEOTIDE SEQUENCE [GENOMIC DNA]</scope>
    <source>
        <strain>CBS 110247 / FRC R-5329 / NRRL 28436</strain>
        <strain>CBS 110248 / FRC-R-9438 / NRRL 28723</strain>
        <strain>CBS 110249 / FRC R-4080 / MRC 0856 / NRRL 29010</strain>
    </source>
</reference>
<keyword id="KW-0456">Lyase</keyword>
<gene>
    <name type="primary">TRI5</name>
</gene>
<name>TRI5_FUSME</name>
<sequence length="375" mass="43826">MENFPTEYFLNTSVRLLEYIRYRDSNYTREERIENLHYAYNKAAHHFAQPRQQKMLKVDPKRLQASLQTIVGMVVYSWAKVSKECMADLSIHYTYTLVLDDSSDDPHPAMVNYFDDLQAGREQAHPWWALVNEHFPNVLRHFGPFCSLNLIRSTMDFFEGCWIEQYNFGGFPGSDDYPQFLRRMNGLGHCVGASLWPKDLFDERKNFLEITTAVAQMENWMVWVNDLMSFYKEFDDERDQISLVKNFVTCHEITLDEALEKLTQETLHSSKQMVAVFADKDPQVMDTIECFMHGYVTWHLCDARYRLHEIYEKVKDQDTEDAKKFCKFFEQAANVGAVAASEWAYPPVAQLASVRAKSDVKEAQKPFLSSIELVE</sequence>
<organism>
    <name type="scientific">Fusarium meridionale</name>
    <dbReference type="NCBI Taxonomy" id="282269"/>
    <lineage>
        <taxon>Eukaryota</taxon>
        <taxon>Fungi</taxon>
        <taxon>Dikarya</taxon>
        <taxon>Ascomycota</taxon>
        <taxon>Pezizomycotina</taxon>
        <taxon>Sordariomycetes</taxon>
        <taxon>Hypocreomycetidae</taxon>
        <taxon>Hypocreales</taxon>
        <taxon>Nectriaceae</taxon>
        <taxon>Fusarium</taxon>
    </lineage>
</organism>
<proteinExistence type="inferred from homology"/>
<feature type="chain" id="PRO_0000221580" description="Trichodiene synthase">
    <location>
        <begin position="1"/>
        <end position="375"/>
    </location>
</feature>
<evidence type="ECO:0000305" key="1"/>
<dbReference type="EC" id="4.2.3.6"/>
<dbReference type="EMBL" id="AY102586">
    <property type="protein sequence ID" value="AAM48902.1"/>
    <property type="molecule type" value="Genomic_DNA"/>
</dbReference>
<dbReference type="EMBL" id="AY102592">
    <property type="protein sequence ID" value="AAM48950.1"/>
    <property type="molecule type" value="Genomic_DNA"/>
</dbReference>
<dbReference type="EMBL" id="AY102593">
    <property type="protein sequence ID" value="AAM48958.1"/>
    <property type="molecule type" value="Genomic_DNA"/>
</dbReference>
<dbReference type="SMR" id="Q8NIC8"/>
<dbReference type="UniPathway" id="UPA00267"/>
<dbReference type="GO" id="GO:0045482">
    <property type="term" value="F:trichodiene synthase activity"/>
    <property type="evidence" value="ECO:0007669"/>
    <property type="project" value="UniProtKB-EC"/>
</dbReference>
<dbReference type="GO" id="GO:0016106">
    <property type="term" value="P:sesquiterpenoid biosynthetic process"/>
    <property type="evidence" value="ECO:0007669"/>
    <property type="project" value="InterPro"/>
</dbReference>
<dbReference type="Gene3D" id="1.10.600.10">
    <property type="entry name" value="Farnesyl Diphosphate Synthase"/>
    <property type="match status" value="1"/>
</dbReference>
<dbReference type="InterPro" id="IPR008949">
    <property type="entry name" value="Isoprenoid_synthase_dom_sf"/>
</dbReference>
<dbReference type="InterPro" id="IPR010458">
    <property type="entry name" value="TRI5_ascomyc"/>
</dbReference>
<dbReference type="InterPro" id="IPR024652">
    <property type="entry name" value="Trichodiene_synth"/>
</dbReference>
<dbReference type="Pfam" id="PF06330">
    <property type="entry name" value="TRI5"/>
    <property type="match status" value="1"/>
</dbReference>
<dbReference type="PIRSF" id="PIRSF001388">
    <property type="entry name" value="TRI5"/>
    <property type="match status" value="1"/>
</dbReference>
<dbReference type="SFLD" id="SFLDS00005">
    <property type="entry name" value="Isoprenoid_Synthase_Type_I"/>
    <property type="match status" value="1"/>
</dbReference>
<dbReference type="SFLD" id="SFLDG01021">
    <property type="entry name" value="Trichodiene_Synthase_Like"/>
    <property type="match status" value="1"/>
</dbReference>
<dbReference type="SUPFAM" id="SSF48576">
    <property type="entry name" value="Terpenoid synthases"/>
    <property type="match status" value="1"/>
</dbReference>
<protein>
    <recommendedName>
        <fullName>Trichodiene synthase</fullName>
        <ecNumber>4.2.3.6</ecNumber>
    </recommendedName>
    <alternativeName>
        <fullName>Sesquiterpene cyclase</fullName>
        <shortName>TS</shortName>
    </alternativeName>
</protein>